<organism>
    <name type="scientific">Mycolicibacterium gilvum (strain PYR-GCK)</name>
    <name type="common">Mycobacterium gilvum (strain PYR-GCK)</name>
    <dbReference type="NCBI Taxonomy" id="350054"/>
    <lineage>
        <taxon>Bacteria</taxon>
        <taxon>Bacillati</taxon>
        <taxon>Actinomycetota</taxon>
        <taxon>Actinomycetes</taxon>
        <taxon>Mycobacteriales</taxon>
        <taxon>Mycobacteriaceae</taxon>
        <taxon>Mycolicibacterium</taxon>
    </lineage>
</organism>
<reference key="1">
    <citation type="submission" date="2007-04" db="EMBL/GenBank/DDBJ databases">
        <title>Complete sequence of chromosome of Mycobacterium gilvum PYR-GCK.</title>
        <authorList>
            <consortium name="US DOE Joint Genome Institute"/>
            <person name="Copeland A."/>
            <person name="Lucas S."/>
            <person name="Lapidus A."/>
            <person name="Barry K."/>
            <person name="Detter J.C."/>
            <person name="Glavina del Rio T."/>
            <person name="Hammon N."/>
            <person name="Israni S."/>
            <person name="Dalin E."/>
            <person name="Tice H."/>
            <person name="Pitluck S."/>
            <person name="Chain P."/>
            <person name="Malfatti S."/>
            <person name="Shin M."/>
            <person name="Vergez L."/>
            <person name="Schmutz J."/>
            <person name="Larimer F."/>
            <person name="Land M."/>
            <person name="Hauser L."/>
            <person name="Kyrpides N."/>
            <person name="Mikhailova N."/>
            <person name="Miller C."/>
            <person name="Richardson P."/>
        </authorList>
    </citation>
    <scope>NUCLEOTIDE SEQUENCE [LARGE SCALE GENOMIC DNA]</scope>
    <source>
        <strain>PYR-GCK</strain>
    </source>
</reference>
<keyword id="KW-0028">Amino-acid biosynthesis</keyword>
<keyword id="KW-0963">Cytoplasm</keyword>
<keyword id="KW-0220">Diaminopimelate biosynthesis</keyword>
<keyword id="KW-0456">Lyase</keyword>
<keyword id="KW-0457">Lysine biosynthesis</keyword>
<keyword id="KW-0704">Schiff base</keyword>
<feature type="chain" id="PRO_0000340971" description="4-hydroxy-tetrahydrodipicolinate synthase">
    <location>
        <begin position="1"/>
        <end position="302"/>
    </location>
</feature>
<feature type="active site" description="Proton donor/acceptor" evidence="1">
    <location>
        <position position="145"/>
    </location>
</feature>
<feature type="active site" description="Schiff-base intermediate with substrate" evidence="1">
    <location>
        <position position="173"/>
    </location>
</feature>
<feature type="binding site" evidence="1">
    <location>
        <position position="57"/>
    </location>
    <ligand>
        <name>pyruvate</name>
        <dbReference type="ChEBI" id="CHEBI:15361"/>
    </ligand>
</feature>
<feature type="binding site" evidence="1">
    <location>
        <position position="213"/>
    </location>
    <ligand>
        <name>pyruvate</name>
        <dbReference type="ChEBI" id="CHEBI:15361"/>
    </ligand>
</feature>
<feature type="site" description="Part of a proton relay during catalysis" evidence="1">
    <location>
        <position position="56"/>
    </location>
</feature>
<feature type="site" description="Part of a proton relay during catalysis" evidence="1">
    <location>
        <position position="119"/>
    </location>
</feature>
<sequence>MPVSTSGFDAPARLGTLLTAMATPFKPDGSLDIETAARLATRLVDAGCDGLVVSGTTGESPTTTDDEKILLLRTVLEAVGDRARIVAGAGTYDTAHSIHLAKASAAEGAHGLLVVTPYYSRPPQAGLVAHFTAVADATDLPNILYDIPPRSVVPIEWDTIRRLAQHPNIVAIKDAKADLHGGGQIIAETGLAYYSGDDALNLPWLAMGAVGFISVWGHLAASQLRDMLSAFASGDVATARKINVALGPLSAAQSRLGGVTLSKAGLRLQGFEVGDPRLPQIPANDVQLQALAADMRAASVLR</sequence>
<protein>
    <recommendedName>
        <fullName evidence="1">4-hydroxy-tetrahydrodipicolinate synthase</fullName>
        <shortName evidence="1">HTPA synthase</shortName>
        <ecNumber evidence="1">4.3.3.7</ecNumber>
    </recommendedName>
</protein>
<name>DAPA_MYCGI</name>
<evidence type="ECO:0000255" key="1">
    <source>
        <dbReference type="HAMAP-Rule" id="MF_00418"/>
    </source>
</evidence>
<evidence type="ECO:0000305" key="2"/>
<gene>
    <name evidence="1" type="primary">dapA</name>
    <name type="ordered locus">Mflv_4000</name>
</gene>
<proteinExistence type="inferred from homology"/>
<accession>A4TCJ3</accession>
<dbReference type="EC" id="4.3.3.7" evidence="1"/>
<dbReference type="EMBL" id="CP000656">
    <property type="protein sequence ID" value="ABP46471.1"/>
    <property type="molecule type" value="Genomic_DNA"/>
</dbReference>
<dbReference type="SMR" id="A4TCJ3"/>
<dbReference type="STRING" id="350054.Mflv_4000"/>
<dbReference type="KEGG" id="mgi:Mflv_4000"/>
<dbReference type="eggNOG" id="COG0329">
    <property type="taxonomic scope" value="Bacteria"/>
</dbReference>
<dbReference type="HOGENOM" id="CLU_049343_7_1_11"/>
<dbReference type="UniPathway" id="UPA00034">
    <property type="reaction ID" value="UER00017"/>
</dbReference>
<dbReference type="GO" id="GO:0005829">
    <property type="term" value="C:cytosol"/>
    <property type="evidence" value="ECO:0007669"/>
    <property type="project" value="TreeGrafter"/>
</dbReference>
<dbReference type="GO" id="GO:0008840">
    <property type="term" value="F:4-hydroxy-tetrahydrodipicolinate synthase activity"/>
    <property type="evidence" value="ECO:0007669"/>
    <property type="project" value="UniProtKB-UniRule"/>
</dbReference>
<dbReference type="GO" id="GO:0019877">
    <property type="term" value="P:diaminopimelate biosynthetic process"/>
    <property type="evidence" value="ECO:0007669"/>
    <property type="project" value="UniProtKB-UniRule"/>
</dbReference>
<dbReference type="GO" id="GO:0009089">
    <property type="term" value="P:lysine biosynthetic process via diaminopimelate"/>
    <property type="evidence" value="ECO:0007669"/>
    <property type="project" value="UniProtKB-UniRule"/>
</dbReference>
<dbReference type="CDD" id="cd00950">
    <property type="entry name" value="DHDPS"/>
    <property type="match status" value="1"/>
</dbReference>
<dbReference type="Gene3D" id="3.20.20.70">
    <property type="entry name" value="Aldolase class I"/>
    <property type="match status" value="1"/>
</dbReference>
<dbReference type="HAMAP" id="MF_00418">
    <property type="entry name" value="DapA"/>
    <property type="match status" value="1"/>
</dbReference>
<dbReference type="InterPro" id="IPR013785">
    <property type="entry name" value="Aldolase_TIM"/>
</dbReference>
<dbReference type="InterPro" id="IPR005263">
    <property type="entry name" value="DapA"/>
</dbReference>
<dbReference type="InterPro" id="IPR002220">
    <property type="entry name" value="DapA-like"/>
</dbReference>
<dbReference type="InterPro" id="IPR020625">
    <property type="entry name" value="Schiff_base-form_aldolases_AS"/>
</dbReference>
<dbReference type="InterPro" id="IPR020624">
    <property type="entry name" value="Schiff_base-form_aldolases_CS"/>
</dbReference>
<dbReference type="NCBIfam" id="TIGR00674">
    <property type="entry name" value="dapA"/>
    <property type="match status" value="1"/>
</dbReference>
<dbReference type="PANTHER" id="PTHR12128:SF66">
    <property type="entry name" value="4-HYDROXY-2-OXOGLUTARATE ALDOLASE, MITOCHONDRIAL"/>
    <property type="match status" value="1"/>
</dbReference>
<dbReference type="PANTHER" id="PTHR12128">
    <property type="entry name" value="DIHYDRODIPICOLINATE SYNTHASE"/>
    <property type="match status" value="1"/>
</dbReference>
<dbReference type="Pfam" id="PF00701">
    <property type="entry name" value="DHDPS"/>
    <property type="match status" value="1"/>
</dbReference>
<dbReference type="PIRSF" id="PIRSF001365">
    <property type="entry name" value="DHDPS"/>
    <property type="match status" value="1"/>
</dbReference>
<dbReference type="PRINTS" id="PR00146">
    <property type="entry name" value="DHPICSNTHASE"/>
</dbReference>
<dbReference type="SMART" id="SM01130">
    <property type="entry name" value="DHDPS"/>
    <property type="match status" value="1"/>
</dbReference>
<dbReference type="SUPFAM" id="SSF51569">
    <property type="entry name" value="Aldolase"/>
    <property type="match status" value="1"/>
</dbReference>
<dbReference type="PROSITE" id="PS00665">
    <property type="entry name" value="DHDPS_1"/>
    <property type="match status" value="1"/>
</dbReference>
<dbReference type="PROSITE" id="PS00666">
    <property type="entry name" value="DHDPS_2"/>
    <property type="match status" value="1"/>
</dbReference>
<comment type="function">
    <text evidence="1">Catalyzes the condensation of (S)-aspartate-beta-semialdehyde [(S)-ASA] and pyruvate to 4-hydroxy-tetrahydrodipicolinate (HTPA).</text>
</comment>
<comment type="catalytic activity">
    <reaction evidence="1">
        <text>L-aspartate 4-semialdehyde + pyruvate = (2S,4S)-4-hydroxy-2,3,4,5-tetrahydrodipicolinate + H2O + H(+)</text>
        <dbReference type="Rhea" id="RHEA:34171"/>
        <dbReference type="ChEBI" id="CHEBI:15361"/>
        <dbReference type="ChEBI" id="CHEBI:15377"/>
        <dbReference type="ChEBI" id="CHEBI:15378"/>
        <dbReference type="ChEBI" id="CHEBI:67139"/>
        <dbReference type="ChEBI" id="CHEBI:537519"/>
        <dbReference type="EC" id="4.3.3.7"/>
    </reaction>
</comment>
<comment type="pathway">
    <text evidence="1">Amino-acid biosynthesis; L-lysine biosynthesis via DAP pathway; (S)-tetrahydrodipicolinate from L-aspartate: step 3/4.</text>
</comment>
<comment type="subunit">
    <text evidence="1">Homotetramer; dimer of dimers.</text>
</comment>
<comment type="subcellular location">
    <subcellularLocation>
        <location evidence="1">Cytoplasm</location>
    </subcellularLocation>
</comment>
<comment type="similarity">
    <text evidence="1">Belongs to the DapA family.</text>
</comment>
<comment type="caution">
    <text evidence="2">Was originally thought to be a dihydrodipicolinate synthase (DHDPS), catalyzing the condensation of (S)-aspartate-beta-semialdehyde [(S)-ASA] and pyruvate to dihydrodipicolinate (DHDP). However, it was shown in E.coli that the product of the enzymatic reaction is not dihydrodipicolinate but in fact (4S)-4-hydroxy-2,3,4,5-tetrahydro-(2S)-dipicolinic acid (HTPA), and that the consecutive dehydration reaction leading to DHDP is not spontaneous but catalyzed by DapB.</text>
</comment>